<gene>
    <name type="ORF">RCOM_1259250</name>
</gene>
<protein>
    <recommendedName>
        <fullName>Casparian strip membrane protein 1</fullName>
        <shortName>RcCASP1</shortName>
    </recommendedName>
</protein>
<reference key="1">
    <citation type="journal article" date="2010" name="Nat. Biotechnol.">
        <title>Draft genome sequence of the oilseed species Ricinus communis.</title>
        <authorList>
            <person name="Chan A.P."/>
            <person name="Crabtree J."/>
            <person name="Zhao Q."/>
            <person name="Lorenzi H."/>
            <person name="Orvis J."/>
            <person name="Puiu D."/>
            <person name="Melake-Berhan A."/>
            <person name="Jones K.M."/>
            <person name="Redman J."/>
            <person name="Chen G."/>
            <person name="Cahoon E.B."/>
            <person name="Gedil M."/>
            <person name="Stanke M."/>
            <person name="Haas B.J."/>
            <person name="Wortman J.R."/>
            <person name="Fraser-Liggett C.M."/>
            <person name="Ravel J."/>
            <person name="Rabinowicz P.D."/>
        </authorList>
    </citation>
    <scope>NUCLEOTIDE SEQUENCE [LARGE SCALE GENOMIC DNA]</scope>
    <source>
        <strain>cv. Hale</strain>
    </source>
</reference>
<reference key="2">
    <citation type="journal article" date="2014" name="Plant Physiol.">
        <title>Functional and evolutionary analysis of the CASPARIAN STRIP MEMBRANE DOMAIN PROTEIN family.</title>
        <authorList>
            <person name="Roppolo D."/>
            <person name="Boeckmann B."/>
            <person name="Pfister A."/>
            <person name="Boutet E."/>
            <person name="Rubio M.C."/>
            <person name="Denervaud-Tendon V."/>
            <person name="Vermeer J.E."/>
            <person name="Gheyselinck J."/>
            <person name="Xenarios I."/>
            <person name="Geldner N."/>
        </authorList>
    </citation>
    <scope>GENE FAMILY</scope>
    <scope>NOMENCLATURE</scope>
</reference>
<proteinExistence type="evidence at transcript level"/>
<feature type="chain" id="PRO_0000391531" description="Casparian strip membrane protein 1">
    <location>
        <begin position="1"/>
        <end position="200"/>
    </location>
</feature>
<feature type="topological domain" description="Cytoplasmic" evidence="2">
    <location>
        <begin position="1"/>
        <end position="38"/>
    </location>
</feature>
<feature type="transmembrane region" description="Helical" evidence="2">
    <location>
        <begin position="39"/>
        <end position="59"/>
    </location>
</feature>
<feature type="topological domain" description="Extracellular" evidence="2">
    <location>
        <begin position="60"/>
        <end position="88"/>
    </location>
</feature>
<feature type="transmembrane region" description="Helical" evidence="2">
    <location>
        <begin position="89"/>
        <end position="109"/>
    </location>
</feature>
<feature type="topological domain" description="Cytoplasmic" evidence="2">
    <location>
        <begin position="110"/>
        <end position="121"/>
    </location>
</feature>
<feature type="transmembrane region" description="Helical" evidence="2">
    <location>
        <begin position="122"/>
        <end position="142"/>
    </location>
</feature>
<feature type="topological domain" description="Extracellular" evidence="2">
    <location>
        <begin position="143"/>
        <end position="175"/>
    </location>
</feature>
<feature type="transmembrane region" description="Helical" evidence="2">
    <location>
        <begin position="176"/>
        <end position="196"/>
    </location>
</feature>
<feature type="topological domain" description="Cytoplasmic" evidence="2">
    <location>
        <begin position="197"/>
        <end position="200"/>
    </location>
</feature>
<feature type="glycosylation site" description="N-linked (GlcNAc...) asparagine" evidence="2">
    <location>
        <position position="153"/>
    </location>
</feature>
<organism>
    <name type="scientific">Ricinus communis</name>
    <name type="common">Castor bean</name>
    <dbReference type="NCBI Taxonomy" id="3988"/>
    <lineage>
        <taxon>Eukaryota</taxon>
        <taxon>Viridiplantae</taxon>
        <taxon>Streptophyta</taxon>
        <taxon>Embryophyta</taxon>
        <taxon>Tracheophyta</taxon>
        <taxon>Spermatophyta</taxon>
        <taxon>Magnoliopsida</taxon>
        <taxon>eudicotyledons</taxon>
        <taxon>Gunneridae</taxon>
        <taxon>Pentapetalae</taxon>
        <taxon>rosids</taxon>
        <taxon>fabids</taxon>
        <taxon>Malpighiales</taxon>
        <taxon>Euphorbiaceae</taxon>
        <taxon>Acalyphoideae</taxon>
        <taxon>Acalypheae</taxon>
        <taxon>Ricinus</taxon>
    </lineage>
</organism>
<name>CASP1_RICCO</name>
<keyword id="KW-1003">Cell membrane</keyword>
<keyword id="KW-0961">Cell wall biogenesis/degradation</keyword>
<keyword id="KW-0325">Glycoprotein</keyword>
<keyword id="KW-0472">Membrane</keyword>
<keyword id="KW-1185">Reference proteome</keyword>
<keyword id="KW-0812">Transmembrane</keyword>
<keyword id="KW-1133">Transmembrane helix</keyword>
<accession>B9SX12</accession>
<sequence length="200" mass="21067">MSTTIEIPAESSAVAKGKAPLIGASSSSYEKKGGYKKGIAIFDFILRLGAVISALSAAATMGTSDETLPFFTQFFQFEAGYDDFPTFQFFVIAMGFVGGYLVLSLPFSVVAIIRPHAVGIRLLLLILDTVALTLNTAAAAAAAAIVYLAHNGNQSANWLAVCQQFGDFCQKVSGGVVASFVSVLVFLLLVVMSAVALRKH</sequence>
<comment type="function">
    <text evidence="1">Regulates membrane-cell wall junctions and localized cell wall deposition. Required for establishment of the Casparian strip membrane domain (CSD) and the subsequent formation of Casparian strips, a cell wall modification of the root endodermis that determines an apoplastic barrier between the intraorganismal apoplasm and the extraorganismal apoplasm and prevents lateral diffusion (By similarity).</text>
</comment>
<comment type="subunit">
    <text evidence="1">Homodimer and heterodimers.</text>
</comment>
<comment type="subcellular location">
    <subcellularLocation>
        <location evidence="1">Cell membrane</location>
        <topology evidence="1">Multi-pass membrane protein</topology>
    </subcellularLocation>
    <text evidence="1">Very restricted localization following a belt shape within the plasma membrane which coincides with the position of the Casparian strip membrane domain in the root endodermis.</text>
</comment>
<comment type="similarity">
    <text evidence="3">Belongs to the Casparian strip membrane proteins (CASP) family.</text>
</comment>
<evidence type="ECO:0000250" key="1"/>
<evidence type="ECO:0000255" key="2"/>
<evidence type="ECO:0000305" key="3"/>
<dbReference type="EMBL" id="EQ974214">
    <property type="protein sequence ID" value="EEF31863.1"/>
    <property type="molecule type" value="Genomic_DNA"/>
</dbReference>
<dbReference type="SMR" id="B9SX12"/>
<dbReference type="FunCoup" id="B9SX12">
    <property type="interactions" value="228"/>
</dbReference>
<dbReference type="STRING" id="3988.B9SX12"/>
<dbReference type="KEGG" id="rcu:8269726"/>
<dbReference type="eggNOG" id="ENOG502RJHP">
    <property type="taxonomic scope" value="Eukaryota"/>
</dbReference>
<dbReference type="InParanoid" id="B9SX12"/>
<dbReference type="OMA" id="MPRRTHH"/>
<dbReference type="OrthoDB" id="753675at2759"/>
<dbReference type="Proteomes" id="UP000008311">
    <property type="component" value="Unassembled WGS sequence"/>
</dbReference>
<dbReference type="GO" id="GO:0048226">
    <property type="term" value="C:Casparian strip"/>
    <property type="evidence" value="ECO:0000318"/>
    <property type="project" value="GO_Central"/>
</dbReference>
<dbReference type="GO" id="GO:0005886">
    <property type="term" value="C:plasma membrane"/>
    <property type="evidence" value="ECO:0000318"/>
    <property type="project" value="GO_Central"/>
</dbReference>
<dbReference type="GO" id="GO:0042545">
    <property type="term" value="P:cell wall modification"/>
    <property type="evidence" value="ECO:0000318"/>
    <property type="project" value="GO_Central"/>
</dbReference>
<dbReference type="GO" id="GO:0007043">
    <property type="term" value="P:cell-cell junction assembly"/>
    <property type="evidence" value="ECO:0000318"/>
    <property type="project" value="GO_Central"/>
</dbReference>
<dbReference type="InterPro" id="IPR006459">
    <property type="entry name" value="CASP/CASPL"/>
</dbReference>
<dbReference type="InterPro" id="IPR006702">
    <property type="entry name" value="CASP_dom"/>
</dbReference>
<dbReference type="InterPro" id="IPR044173">
    <property type="entry name" value="CASPL"/>
</dbReference>
<dbReference type="NCBIfam" id="TIGR01569">
    <property type="entry name" value="A_tha_TIGR01569"/>
    <property type="match status" value="1"/>
</dbReference>
<dbReference type="PANTHER" id="PTHR36488:SF11">
    <property type="entry name" value="CASP-LIKE PROTEIN"/>
    <property type="match status" value="1"/>
</dbReference>
<dbReference type="PANTHER" id="PTHR36488">
    <property type="entry name" value="CASP-LIKE PROTEIN 1U1"/>
    <property type="match status" value="1"/>
</dbReference>
<dbReference type="Pfam" id="PF04535">
    <property type="entry name" value="CASP_dom"/>
    <property type="match status" value="1"/>
</dbReference>